<organism>
    <name type="scientific">Komagataella pastoris</name>
    <name type="common">Yeast</name>
    <name type="synonym">Pichia pastoris</name>
    <dbReference type="NCBI Taxonomy" id="4922"/>
    <lineage>
        <taxon>Eukaryota</taxon>
        <taxon>Fungi</taxon>
        <taxon>Dikarya</taxon>
        <taxon>Ascomycota</taxon>
        <taxon>Saccharomycotina</taxon>
        <taxon>Pichiomycetes</taxon>
        <taxon>Pichiales</taxon>
        <taxon>Pichiaceae</taxon>
        <taxon>Komagataella</taxon>
    </lineage>
</organism>
<comment type="function">
    <text evidence="2 6 7">E3 ubiquitin-protein ligase component of the peroxisomal translocation complex (PubMed:12121419, PubMed:23344950). The two types of peroxisomal matrix targeting signals, PTS1 and PTS2, are first recognized in the cytosol by their receptors PEX5 and PEX7, respectively, which then carry the cargo to the peroxisomal membrane. The peroxisomal targeting signal (PTS) receptor-cargo complexes interact with peroxisomal membrane protein (PMP) components of the docking complex. They have then additional downstream interactions with the translocation complex, leading to the transport of fully folded and oligomerized cargo into the peroxisome matrix (PubMed:12121419). The peroxisomal translocation complex forms the retrotranslocation channel with each subunit contributing transmembrane segments that coassemble into an open channel that specifically allows the passage of PEX5 and PEX20 through the peroxisomal membrane (By similarity). Specifically catalyzes monoubiquitination of PEX5 and/or PEX20 at 'Cys-6' and 'Cys-8', respectively, a modification that acts as a signal for PEX5 or PEX20 export from peroxisomes to the cytosol, thereby promoting PEX5 and PEX20 recycling (PubMed:12121419, PubMed:23344950).</text>
</comment>
<comment type="catalytic activity">
    <reaction evidence="7">
        <text>[E2 ubiquitin-conjugating enzyme]-S-ubiquitinyl-L-cysteine + [acceptor protein]-L-cysteine = [E2 ubiquitin-conjugating enzyme]-L-cysteine + [acceptor protein]-S-ubiquitinyl-L-cysteine.</text>
        <dbReference type="EC" id="2.3.2.36"/>
    </reaction>
</comment>
<comment type="pathway">
    <text evidence="7">Protein modification; protein ubiquitination.</text>
</comment>
<comment type="subunit">
    <text evidence="6">Component of the peroxisomal translocation complex, composed of at least PEX3, PEX2, PEX10 and PEX12.</text>
</comment>
<comment type="subcellular location">
    <subcellularLocation>
        <location evidence="8">Peroxisome membrane</location>
        <topology evidence="3">Multi-pass membrane protein</topology>
    </subcellularLocation>
</comment>
<comment type="domain">
    <text evidence="1">The three subunits of the retrotranslocation channel (PEX2, PEX10 and PEX12) coassemble in the membrane into a channel with an open 10 Angstrom pore. The RING-type zinc-fingers that catalyze PEX5 or PEX20 receptor ubiquitination are positioned above the pore on the cytosolic side of the complex.</text>
</comment>
<comment type="similarity">
    <text evidence="12">Belongs to the pex2/pex10/pex12 family.</text>
</comment>
<dbReference type="EC" id="2.3.2.36" evidence="7"/>
<dbReference type="EMBL" id="X96945">
    <property type="protein sequence ID" value="CAA65646.1"/>
    <property type="molecule type" value="Genomic_DNA"/>
</dbReference>
<dbReference type="SMR" id="Q01964"/>
<dbReference type="UniPathway" id="UPA00143"/>
<dbReference type="GO" id="GO:0005778">
    <property type="term" value="C:peroxisomal membrane"/>
    <property type="evidence" value="ECO:0000314"/>
    <property type="project" value="UniProtKB"/>
</dbReference>
<dbReference type="GO" id="GO:0016740">
    <property type="term" value="F:transferase activity"/>
    <property type="evidence" value="ECO:0007669"/>
    <property type="project" value="UniProtKB-KW"/>
</dbReference>
<dbReference type="GO" id="GO:0008270">
    <property type="term" value="F:zinc ion binding"/>
    <property type="evidence" value="ECO:0007669"/>
    <property type="project" value="UniProtKB-KW"/>
</dbReference>
<dbReference type="GO" id="GO:0007031">
    <property type="term" value="P:peroxisome organization"/>
    <property type="evidence" value="ECO:0000314"/>
    <property type="project" value="UniProtKB"/>
</dbReference>
<dbReference type="GO" id="GO:0016562">
    <property type="term" value="P:protein import into peroxisome matrix, receptor recycling"/>
    <property type="evidence" value="ECO:0000315"/>
    <property type="project" value="UniProtKB"/>
</dbReference>
<dbReference type="GO" id="GO:0016567">
    <property type="term" value="P:protein ubiquitination"/>
    <property type="evidence" value="ECO:0000315"/>
    <property type="project" value="UniProtKB"/>
</dbReference>
<dbReference type="Gene3D" id="3.30.40.10">
    <property type="entry name" value="Zinc/RING finger domain, C3HC4 (zinc finger)"/>
    <property type="match status" value="1"/>
</dbReference>
<dbReference type="InterPro" id="IPR025654">
    <property type="entry name" value="PEX2/10"/>
</dbReference>
<dbReference type="InterPro" id="IPR006845">
    <property type="entry name" value="Pex_N"/>
</dbReference>
<dbReference type="InterPro" id="IPR001841">
    <property type="entry name" value="Znf_RING"/>
</dbReference>
<dbReference type="InterPro" id="IPR013083">
    <property type="entry name" value="Znf_RING/FYVE/PHD"/>
</dbReference>
<dbReference type="InterPro" id="IPR017907">
    <property type="entry name" value="Znf_RING_CS"/>
</dbReference>
<dbReference type="PANTHER" id="PTHR23350">
    <property type="entry name" value="PEROXISOME ASSEMBLY PROTEIN 10"/>
    <property type="match status" value="1"/>
</dbReference>
<dbReference type="PANTHER" id="PTHR23350:SF4">
    <property type="entry name" value="PEROXISOME BIOGENESIS FACTOR 2"/>
    <property type="match status" value="1"/>
</dbReference>
<dbReference type="Pfam" id="PF04757">
    <property type="entry name" value="Pex2_Pex12"/>
    <property type="match status" value="1"/>
</dbReference>
<dbReference type="SMART" id="SM00184">
    <property type="entry name" value="RING"/>
    <property type="match status" value="1"/>
</dbReference>
<dbReference type="SUPFAM" id="SSF57850">
    <property type="entry name" value="RING/U-box"/>
    <property type="match status" value="1"/>
</dbReference>
<dbReference type="PROSITE" id="PS00518">
    <property type="entry name" value="ZF_RING_1"/>
    <property type="match status" value="1"/>
</dbReference>
<reference key="1">
    <citation type="journal article" date="1996" name="Mol. Cell. Biol.">
        <title>The Pichia pastoris PER6 gene product is a peroxisomal integral membrane protein essential for peroxisome biogenesis and has sequence similarity to the Zellweger syndrome protein PAF-1.</title>
        <authorList>
            <person name="Waterham H.R."/>
            <person name="de Vries Y."/>
            <person name="Russell K.A."/>
            <person name="Xie W."/>
            <person name="Veenhuis M."/>
            <person name="Cregg J.M."/>
        </authorList>
    </citation>
    <scope>NUCLEOTIDE SEQUENCE [GENOMIC DNA]</scope>
    <scope>SUBCELLULAR LOCATION</scope>
    <source>
        <strain>ATCC 76273 / CBS 7435 / CECT 11407 / NRRL Y-11430</strain>
    </source>
</reference>
<reference key="2">
    <citation type="journal article" date="2013" name="J. Biol. Chem.">
        <title>Unique requirements for mono- and polyubiquitination of the peroxisomal targeting signal co-receptor, Pex20.</title>
        <authorList>
            <person name="Liu X."/>
            <person name="Subramani S."/>
        </authorList>
    </citation>
    <scope>FUNCTION</scope>
    <scope>CATALYTIC ACTIVITY</scope>
    <scope>MUTAGENESIS OF 281-CYS--CYS-284</scope>
</reference>
<reference key="3">
    <citation type="journal article" date="2002" name="Traffic">
        <title>Peroxisome remnants in pex3delta cells and the requirement of Pex3p for interactions between the peroxisomal docking and translocation subcomplexes.</title>
        <authorList>
            <person name="Hazra P.P."/>
            <person name="Suriapranata I."/>
            <person name="Snyder W.B."/>
            <person name="Subramani S."/>
        </authorList>
    </citation>
    <scope>FUNCTION</scope>
    <scope>SUBUNIT</scope>
</reference>
<evidence type="ECO:0000250" key="1">
    <source>
        <dbReference type="UniProtKB" id="G2Q1C9"/>
    </source>
</evidence>
<evidence type="ECO:0000250" key="2">
    <source>
        <dbReference type="UniProtKB" id="P32800"/>
    </source>
</evidence>
<evidence type="ECO:0000255" key="3"/>
<evidence type="ECO:0000255" key="4">
    <source>
        <dbReference type="PROSITE-ProRule" id="PRU00175"/>
    </source>
</evidence>
<evidence type="ECO:0000256" key="5">
    <source>
        <dbReference type="SAM" id="MobiDB-lite"/>
    </source>
</evidence>
<evidence type="ECO:0000269" key="6">
    <source>
    </source>
</evidence>
<evidence type="ECO:0000269" key="7">
    <source>
    </source>
</evidence>
<evidence type="ECO:0000269" key="8">
    <source>
    </source>
</evidence>
<evidence type="ECO:0000303" key="9">
    <source>
    </source>
</evidence>
<evidence type="ECO:0000303" key="10">
    <source>
    </source>
</evidence>
<evidence type="ECO:0000303" key="11">
    <source>
    </source>
</evidence>
<evidence type="ECO:0000305" key="12"/>
<feature type="chain" id="PRO_0000056372" description="Peroxisomal biogenesis factor 2">
    <location>
        <begin position="1"/>
        <end position="461"/>
    </location>
</feature>
<feature type="topological domain" description="Peroxisomal matrix" evidence="1">
    <location>
        <begin position="1"/>
        <end position="13"/>
    </location>
</feature>
<feature type="transmembrane region" description="Helical; Name=TM1" evidence="1">
    <location>
        <begin position="14"/>
        <end position="40"/>
    </location>
</feature>
<feature type="topological domain" description="Cytoplasmic" evidence="1">
    <location>
        <begin position="41"/>
        <end position="51"/>
    </location>
</feature>
<feature type="transmembrane region" description="Helical; Name=TM2" evidence="1">
    <location>
        <begin position="52"/>
        <end position="77"/>
    </location>
</feature>
<feature type="topological domain" description="Peroxisomal matrix" evidence="1">
    <location>
        <begin position="78"/>
        <end position="101"/>
    </location>
</feature>
<feature type="transmembrane region" description="Helical; Name=TM3" evidence="1">
    <location>
        <begin position="102"/>
        <end position="139"/>
    </location>
</feature>
<feature type="topological domain" description="Cytoplasmic" evidence="1">
    <location>
        <begin position="140"/>
        <end position="151"/>
    </location>
</feature>
<feature type="transmembrane region" description="Helical; Name=TM4" evidence="1">
    <location>
        <begin position="152"/>
        <end position="185"/>
    </location>
</feature>
<feature type="topological domain" description="Peroxisomal matrix" evidence="1">
    <location>
        <begin position="186"/>
        <end position="218"/>
    </location>
</feature>
<feature type="transmembrane region" description="Helical; Name=TM5" evidence="1">
    <location>
        <begin position="219"/>
        <end position="242"/>
    </location>
</feature>
<feature type="topological domain" description="Cytoplasmic" evidence="1">
    <location>
        <begin position="243"/>
        <end position="461"/>
    </location>
</feature>
<feature type="zinc finger region" description="RING-type" evidence="4">
    <location>
        <begin position="281"/>
        <end position="352"/>
    </location>
</feature>
<feature type="region of interest" description="Disordered" evidence="5">
    <location>
        <begin position="374"/>
        <end position="408"/>
    </location>
</feature>
<feature type="region of interest" description="Disordered" evidence="5">
    <location>
        <begin position="440"/>
        <end position="461"/>
    </location>
</feature>
<feature type="compositionally biased region" description="Acidic residues" evidence="5">
    <location>
        <begin position="376"/>
        <end position="387"/>
    </location>
</feature>
<feature type="compositionally biased region" description="Basic and acidic residues" evidence="5">
    <location>
        <begin position="388"/>
        <end position="397"/>
    </location>
</feature>
<feature type="compositionally biased region" description="Acidic residues" evidence="5">
    <location>
        <begin position="440"/>
        <end position="453"/>
    </location>
</feature>
<feature type="binding site" evidence="1">
    <location>
        <position position="281"/>
    </location>
    <ligand>
        <name>Zn(2+)</name>
        <dbReference type="ChEBI" id="CHEBI:29105"/>
        <label>1</label>
    </ligand>
</feature>
<feature type="binding site" evidence="1">
    <location>
        <position position="284"/>
    </location>
    <ligand>
        <name>Zn(2+)</name>
        <dbReference type="ChEBI" id="CHEBI:29105"/>
        <label>1</label>
    </ligand>
</feature>
<feature type="binding site" evidence="1">
    <location>
        <position position="314"/>
    </location>
    <ligand>
        <name>Zn(2+)</name>
        <dbReference type="ChEBI" id="CHEBI:29105"/>
        <label>2</label>
    </ligand>
</feature>
<feature type="binding site" evidence="1">
    <location>
        <position position="316"/>
    </location>
    <ligand>
        <name>Zn(2+)</name>
        <dbReference type="ChEBI" id="CHEBI:29105"/>
        <label>2</label>
    </ligand>
</feature>
<feature type="binding site" evidence="1">
    <location>
        <position position="319"/>
    </location>
    <ligand>
        <name>Zn(2+)</name>
        <dbReference type="ChEBI" id="CHEBI:29105"/>
        <label>1</label>
    </ligand>
</feature>
<feature type="binding site" evidence="1">
    <location>
        <position position="322"/>
    </location>
    <ligand>
        <name>Zn(2+)</name>
        <dbReference type="ChEBI" id="CHEBI:29105"/>
        <label>1</label>
    </ligand>
</feature>
<feature type="binding site" evidence="1">
    <location>
        <position position="348"/>
    </location>
    <ligand>
        <name>Zn(2+)</name>
        <dbReference type="ChEBI" id="CHEBI:29105"/>
        <label>2</label>
    </ligand>
</feature>
<feature type="binding site" evidence="1">
    <location>
        <position position="351"/>
    </location>
    <ligand>
        <name>Zn(2+)</name>
        <dbReference type="ChEBI" id="CHEBI:29105"/>
        <label>2</label>
    </ligand>
</feature>
<feature type="mutagenesis site" description="Impaired recycling of PEX20." evidence="7">
    <original>CAIC</original>
    <variation>SAIS</variation>
    <location>
        <begin position="281"/>
        <end position="284"/>
    </location>
</feature>
<sequence>MPNRLIPLANPANRVLQLDAKLLDNEISDMLYRQLSGAFNSNRLPSWLGRIHSNYASELKLLLELLIFKVTVWNKHSSYGLTLQNLVMYDGGVHNKKFRSKQQSELRVTKKILLLSSVLLGYFVKKIQSYVYSFEDYDLETDGEDLSTLERIRLKTIKLLKSQISTLEKAHSVLSLVNFVTFLVSGSFPDLTTRILNIRFKPLVTTQVAFASNPETISYEFQNRQLVWNTLTEFIVFILPALSVPKFTKSLVSSITGTSPKSSQVTDEDLKVFSSLPERVCAICFQNSQNSDSGAQNDISLNDTLVTNPYETTCGHIYCYVCILSKLQIFKEEGKNLPKSDPNKYWHCLRCNEPASWCRVYTGDVEDALRQKAVEEVTEDEDASSEDEEKRDQDSEGAKTVSQSFHHVNGSDYQTASFIEQAELNENEYTDGSEVEIYDAEDEYTDEEVDDDSPGFFVGAL</sequence>
<protein>
    <recommendedName>
        <fullName evidence="9">Peroxisomal biogenesis factor 2</fullName>
        <ecNumber evidence="7">2.3.2.36</ecNumber>
    </recommendedName>
    <alternativeName>
        <fullName evidence="10">E3 ubiquitin-protein ligase PEX2</fullName>
    </alternativeName>
    <alternativeName>
        <fullName evidence="9">Peroxin-2</fullName>
    </alternativeName>
    <alternativeName>
        <fullName evidence="11">Peroxisomal protein PER6</fullName>
    </alternativeName>
</protein>
<proteinExistence type="evidence at protein level"/>
<keyword id="KW-0472">Membrane</keyword>
<keyword id="KW-0479">Metal-binding</keyword>
<keyword id="KW-0576">Peroxisome</keyword>
<keyword id="KW-0962">Peroxisome biogenesis</keyword>
<keyword id="KW-0653">Protein transport</keyword>
<keyword id="KW-0808">Transferase</keyword>
<keyword id="KW-0812">Transmembrane</keyword>
<keyword id="KW-1133">Transmembrane helix</keyword>
<keyword id="KW-0813">Transport</keyword>
<keyword id="KW-0833">Ubl conjugation pathway</keyword>
<keyword id="KW-0862">Zinc</keyword>
<keyword id="KW-0863">Zinc-finger</keyword>
<gene>
    <name evidence="9" type="primary">PEX2</name>
    <name evidence="11" type="synonym">PER6</name>
</gene>
<accession>Q01964</accession>
<name>PEX2_PICPA</name>